<accession>Q7VRX1</accession>
<evidence type="ECO:0000250" key="1"/>
<evidence type="ECO:0000255" key="2">
    <source>
        <dbReference type="HAMAP-Rule" id="MF_00047"/>
    </source>
</evidence>
<comment type="function">
    <text evidence="2">Cell wall formation.</text>
</comment>
<comment type="catalytic activity">
    <reaction evidence="2">
        <text>2 D-alanine + ATP = D-alanyl-D-alanine + ADP + phosphate + H(+)</text>
        <dbReference type="Rhea" id="RHEA:11224"/>
        <dbReference type="ChEBI" id="CHEBI:15378"/>
        <dbReference type="ChEBI" id="CHEBI:30616"/>
        <dbReference type="ChEBI" id="CHEBI:43474"/>
        <dbReference type="ChEBI" id="CHEBI:57416"/>
        <dbReference type="ChEBI" id="CHEBI:57822"/>
        <dbReference type="ChEBI" id="CHEBI:456216"/>
        <dbReference type="EC" id="6.3.2.4"/>
    </reaction>
</comment>
<comment type="cofactor">
    <cofactor evidence="1">
        <name>Mg(2+)</name>
        <dbReference type="ChEBI" id="CHEBI:18420"/>
    </cofactor>
    <cofactor evidence="1">
        <name>Mn(2+)</name>
        <dbReference type="ChEBI" id="CHEBI:29035"/>
    </cofactor>
    <text evidence="1">Binds 2 magnesium or manganese ions per subunit.</text>
</comment>
<comment type="pathway">
    <text evidence="2">Cell wall biogenesis; peptidoglycan biosynthesis.</text>
</comment>
<comment type="subcellular location">
    <subcellularLocation>
        <location evidence="2">Cytoplasm</location>
    </subcellularLocation>
</comment>
<comment type="similarity">
    <text evidence="2">Belongs to the D-alanine--D-alanine ligase family.</text>
</comment>
<keyword id="KW-0067">ATP-binding</keyword>
<keyword id="KW-0133">Cell shape</keyword>
<keyword id="KW-0961">Cell wall biogenesis/degradation</keyword>
<keyword id="KW-0963">Cytoplasm</keyword>
<keyword id="KW-0436">Ligase</keyword>
<keyword id="KW-0460">Magnesium</keyword>
<keyword id="KW-0464">Manganese</keyword>
<keyword id="KW-0479">Metal-binding</keyword>
<keyword id="KW-0547">Nucleotide-binding</keyword>
<keyword id="KW-0573">Peptidoglycan synthesis</keyword>
<keyword id="KW-1185">Reference proteome</keyword>
<proteinExistence type="inferred from homology"/>
<gene>
    <name evidence="2" type="primary">ddl</name>
    <name type="synonym">ddlA</name>
    <name type="ordered locus">Bfl474</name>
</gene>
<name>DDL_BLOFL</name>
<feature type="chain" id="PRO_0000177801" description="D-alanine--D-alanine ligase">
    <location>
        <begin position="1"/>
        <end position="354"/>
    </location>
</feature>
<feature type="domain" description="ATP-grasp" evidence="2">
    <location>
        <begin position="140"/>
        <end position="344"/>
    </location>
</feature>
<feature type="binding site" evidence="2">
    <location>
        <begin position="170"/>
        <end position="225"/>
    </location>
    <ligand>
        <name>ATP</name>
        <dbReference type="ChEBI" id="CHEBI:30616"/>
    </ligand>
</feature>
<feature type="binding site" evidence="2">
    <location>
        <position position="298"/>
    </location>
    <ligand>
        <name>Mg(2+)</name>
        <dbReference type="ChEBI" id="CHEBI:18420"/>
        <label>1</label>
    </ligand>
</feature>
<feature type="binding site" evidence="2">
    <location>
        <position position="311"/>
    </location>
    <ligand>
        <name>Mg(2+)</name>
        <dbReference type="ChEBI" id="CHEBI:18420"/>
        <label>1</label>
    </ligand>
</feature>
<feature type="binding site" evidence="2">
    <location>
        <position position="311"/>
    </location>
    <ligand>
        <name>Mg(2+)</name>
        <dbReference type="ChEBI" id="CHEBI:18420"/>
        <label>2</label>
    </ligand>
</feature>
<feature type="binding site" evidence="2">
    <location>
        <position position="313"/>
    </location>
    <ligand>
        <name>Mg(2+)</name>
        <dbReference type="ChEBI" id="CHEBI:18420"/>
        <label>2</label>
    </ligand>
</feature>
<dbReference type="EC" id="6.3.2.4" evidence="2"/>
<dbReference type="EMBL" id="BX248583">
    <property type="protein sequence ID" value="CAD83163.1"/>
    <property type="molecule type" value="Genomic_DNA"/>
</dbReference>
<dbReference type="SMR" id="Q7VRX1"/>
<dbReference type="STRING" id="203907.Bfl474"/>
<dbReference type="KEGG" id="bfl:Bfl474"/>
<dbReference type="eggNOG" id="COG1181">
    <property type="taxonomic scope" value="Bacteria"/>
</dbReference>
<dbReference type="HOGENOM" id="CLU_039268_0_1_6"/>
<dbReference type="OrthoDB" id="9813261at2"/>
<dbReference type="UniPathway" id="UPA00219"/>
<dbReference type="Proteomes" id="UP000002192">
    <property type="component" value="Chromosome"/>
</dbReference>
<dbReference type="GO" id="GO:0005829">
    <property type="term" value="C:cytosol"/>
    <property type="evidence" value="ECO:0007669"/>
    <property type="project" value="TreeGrafter"/>
</dbReference>
<dbReference type="GO" id="GO:0005524">
    <property type="term" value="F:ATP binding"/>
    <property type="evidence" value="ECO:0007669"/>
    <property type="project" value="UniProtKB-KW"/>
</dbReference>
<dbReference type="GO" id="GO:0008716">
    <property type="term" value="F:D-alanine-D-alanine ligase activity"/>
    <property type="evidence" value="ECO:0007669"/>
    <property type="project" value="UniProtKB-UniRule"/>
</dbReference>
<dbReference type="GO" id="GO:0046872">
    <property type="term" value="F:metal ion binding"/>
    <property type="evidence" value="ECO:0007669"/>
    <property type="project" value="UniProtKB-KW"/>
</dbReference>
<dbReference type="GO" id="GO:0071555">
    <property type="term" value="P:cell wall organization"/>
    <property type="evidence" value="ECO:0007669"/>
    <property type="project" value="UniProtKB-KW"/>
</dbReference>
<dbReference type="GO" id="GO:0009252">
    <property type="term" value="P:peptidoglycan biosynthetic process"/>
    <property type="evidence" value="ECO:0007669"/>
    <property type="project" value="UniProtKB-UniRule"/>
</dbReference>
<dbReference type="GO" id="GO:0008360">
    <property type="term" value="P:regulation of cell shape"/>
    <property type="evidence" value="ECO:0007669"/>
    <property type="project" value="UniProtKB-KW"/>
</dbReference>
<dbReference type="FunFam" id="3.30.470.20:FF:000008">
    <property type="entry name" value="D-alanine--D-alanine ligase"/>
    <property type="match status" value="1"/>
</dbReference>
<dbReference type="Gene3D" id="3.40.50.20">
    <property type="match status" value="1"/>
</dbReference>
<dbReference type="Gene3D" id="3.30.1490.20">
    <property type="entry name" value="ATP-grasp fold, A domain"/>
    <property type="match status" value="1"/>
</dbReference>
<dbReference type="Gene3D" id="3.30.470.20">
    <property type="entry name" value="ATP-grasp fold, B domain"/>
    <property type="match status" value="1"/>
</dbReference>
<dbReference type="HAMAP" id="MF_00047">
    <property type="entry name" value="Dala_Dala_lig"/>
    <property type="match status" value="1"/>
</dbReference>
<dbReference type="InterPro" id="IPR011761">
    <property type="entry name" value="ATP-grasp"/>
</dbReference>
<dbReference type="InterPro" id="IPR013815">
    <property type="entry name" value="ATP_grasp_subdomain_1"/>
</dbReference>
<dbReference type="InterPro" id="IPR000291">
    <property type="entry name" value="D-Ala_lig_Van_CS"/>
</dbReference>
<dbReference type="InterPro" id="IPR005905">
    <property type="entry name" value="D_ala_D_ala"/>
</dbReference>
<dbReference type="InterPro" id="IPR011095">
    <property type="entry name" value="Dala_Dala_lig_C"/>
</dbReference>
<dbReference type="InterPro" id="IPR011127">
    <property type="entry name" value="Dala_Dala_lig_N"/>
</dbReference>
<dbReference type="InterPro" id="IPR016185">
    <property type="entry name" value="PreATP-grasp_dom_sf"/>
</dbReference>
<dbReference type="NCBIfam" id="TIGR01205">
    <property type="entry name" value="D_ala_D_alaTIGR"/>
    <property type="match status" value="1"/>
</dbReference>
<dbReference type="NCBIfam" id="NF002528">
    <property type="entry name" value="PRK01966.1-4"/>
    <property type="match status" value="1"/>
</dbReference>
<dbReference type="PANTHER" id="PTHR23132">
    <property type="entry name" value="D-ALANINE--D-ALANINE LIGASE"/>
    <property type="match status" value="1"/>
</dbReference>
<dbReference type="PANTHER" id="PTHR23132:SF25">
    <property type="entry name" value="D-ALANINE--D-ALANINE LIGASE A"/>
    <property type="match status" value="1"/>
</dbReference>
<dbReference type="Pfam" id="PF07478">
    <property type="entry name" value="Dala_Dala_lig_C"/>
    <property type="match status" value="1"/>
</dbReference>
<dbReference type="Pfam" id="PF01820">
    <property type="entry name" value="Dala_Dala_lig_N"/>
    <property type="match status" value="1"/>
</dbReference>
<dbReference type="PIRSF" id="PIRSF039102">
    <property type="entry name" value="Ddl/VanB"/>
    <property type="match status" value="1"/>
</dbReference>
<dbReference type="SUPFAM" id="SSF56059">
    <property type="entry name" value="Glutathione synthetase ATP-binding domain-like"/>
    <property type="match status" value="1"/>
</dbReference>
<dbReference type="SUPFAM" id="SSF52440">
    <property type="entry name" value="PreATP-grasp domain"/>
    <property type="match status" value="1"/>
</dbReference>
<dbReference type="PROSITE" id="PS50975">
    <property type="entry name" value="ATP_GRASP"/>
    <property type="match status" value="1"/>
</dbReference>
<dbReference type="PROSITE" id="PS00843">
    <property type="entry name" value="DALA_DALA_LIGASE_1"/>
    <property type="match status" value="1"/>
</dbReference>
<dbReference type="PROSITE" id="PS00844">
    <property type="entry name" value="DALA_DALA_LIGASE_2"/>
    <property type="match status" value="1"/>
</dbReference>
<reference key="1">
    <citation type="journal article" date="2003" name="Proc. Natl. Acad. Sci. U.S.A.">
        <title>The genome sequence of Blochmannia floridanus: comparative analysis of reduced genomes.</title>
        <authorList>
            <person name="Gil R."/>
            <person name="Silva F.J."/>
            <person name="Zientz E."/>
            <person name="Delmotte F."/>
            <person name="Gonzalez-Candelas F."/>
            <person name="Latorre A."/>
            <person name="Rausell C."/>
            <person name="Kamerbeek J."/>
            <person name="Gadau J."/>
            <person name="Hoelldobler B."/>
            <person name="van Ham R.C.H.J."/>
            <person name="Gross R."/>
            <person name="Moya A."/>
        </authorList>
    </citation>
    <scope>NUCLEOTIDE SEQUENCE [LARGE SCALE GENOMIC DNA]</scope>
</reference>
<organism>
    <name type="scientific">Blochmanniella floridana</name>
    <dbReference type="NCBI Taxonomy" id="203907"/>
    <lineage>
        <taxon>Bacteria</taxon>
        <taxon>Pseudomonadati</taxon>
        <taxon>Pseudomonadota</taxon>
        <taxon>Gammaproteobacteria</taxon>
        <taxon>Enterobacterales</taxon>
        <taxon>Enterobacteriaceae</taxon>
        <taxon>ant endosymbionts</taxon>
        <taxon>Candidatus Blochmanniella</taxon>
    </lineage>
</organism>
<protein>
    <recommendedName>
        <fullName evidence="2">D-alanine--D-alanine ligase</fullName>
        <ecNumber evidence="2">6.3.2.4</ecNumber>
    </recommendedName>
    <alternativeName>
        <fullName evidence="2">D-Ala-D-Ala ligase</fullName>
    </alternativeName>
    <alternativeName>
        <fullName evidence="2">D-alanylalanine synthetase</fullName>
    </alternativeName>
</protein>
<sequence>MKSKLRVGLVCGGCSLEHEVSLKSAIYIMKYINKRFFEVVVLWISKQGDWYIVENDDMHIDFFVNKENLHKCMPILMFSSGNRCFEYINNILSLDVIFPIIHGALGEDGSLQGLLRLMNLPYVGSDVLGSAICMDKDITKRLLRDSGLSITPFRTFLAHEKKKLKFLNFADMFGLPFFVKPVNQGSSIGVAKVNDDYSFHSALDIAFFYSHKIIIESCIAGRELECAVLGNNENPITSVCGEIIKKNDDFYTYCDKYVDHNSEIVIPAVLEKSVSSKIRSIAIRVFQILNCFGMARVDIFLFGKDRIIINEVNTLPGFTSDSMYLKLWQATGINISTLLTRLIMLALDRYYKYN</sequence>